<gene>
    <name evidence="1" type="primary">recR</name>
    <name type="ordered locus">BLD_1288</name>
</gene>
<name>RECR_BIFLD</name>
<proteinExistence type="inferred from homology"/>
<protein>
    <recommendedName>
        <fullName evidence="1">Recombination protein RecR</fullName>
    </recommendedName>
</protein>
<keyword id="KW-0227">DNA damage</keyword>
<keyword id="KW-0233">DNA recombination</keyword>
<keyword id="KW-0234">DNA repair</keyword>
<keyword id="KW-0479">Metal-binding</keyword>
<keyword id="KW-0862">Zinc</keyword>
<keyword id="KW-0863">Zinc-finger</keyword>
<dbReference type="EMBL" id="CP000605">
    <property type="protein sequence ID" value="ACD98733.1"/>
    <property type="molecule type" value="Genomic_DNA"/>
</dbReference>
<dbReference type="RefSeq" id="WP_007051621.1">
    <property type="nucleotide sequence ID" value="NZ_AABM02000012.1"/>
</dbReference>
<dbReference type="SMR" id="B3DUB4"/>
<dbReference type="GeneID" id="69577386"/>
<dbReference type="KEGG" id="blj:BLD_1288"/>
<dbReference type="HOGENOM" id="CLU_060739_1_0_11"/>
<dbReference type="Proteomes" id="UP000002419">
    <property type="component" value="Chromosome"/>
</dbReference>
<dbReference type="GO" id="GO:0003677">
    <property type="term" value="F:DNA binding"/>
    <property type="evidence" value="ECO:0007669"/>
    <property type="project" value="UniProtKB-UniRule"/>
</dbReference>
<dbReference type="GO" id="GO:0008270">
    <property type="term" value="F:zinc ion binding"/>
    <property type="evidence" value="ECO:0007669"/>
    <property type="project" value="UniProtKB-KW"/>
</dbReference>
<dbReference type="GO" id="GO:0006310">
    <property type="term" value="P:DNA recombination"/>
    <property type="evidence" value="ECO:0007669"/>
    <property type="project" value="UniProtKB-UniRule"/>
</dbReference>
<dbReference type="GO" id="GO:0006281">
    <property type="term" value="P:DNA repair"/>
    <property type="evidence" value="ECO:0007669"/>
    <property type="project" value="UniProtKB-UniRule"/>
</dbReference>
<dbReference type="CDD" id="cd01025">
    <property type="entry name" value="TOPRIM_recR"/>
    <property type="match status" value="1"/>
</dbReference>
<dbReference type="Gene3D" id="3.40.1360.10">
    <property type="match status" value="1"/>
</dbReference>
<dbReference type="Gene3D" id="6.10.250.240">
    <property type="match status" value="1"/>
</dbReference>
<dbReference type="Gene3D" id="1.10.8.420">
    <property type="entry name" value="RecR Domain 1"/>
    <property type="match status" value="1"/>
</dbReference>
<dbReference type="HAMAP" id="MF_00017">
    <property type="entry name" value="RecR"/>
    <property type="match status" value="1"/>
</dbReference>
<dbReference type="InterPro" id="IPR000093">
    <property type="entry name" value="DNA_Rcmb_RecR"/>
</dbReference>
<dbReference type="InterPro" id="IPR023627">
    <property type="entry name" value="Rcmb_RecR"/>
</dbReference>
<dbReference type="InterPro" id="IPR015967">
    <property type="entry name" value="Rcmb_RecR_Znf"/>
</dbReference>
<dbReference type="InterPro" id="IPR006171">
    <property type="entry name" value="TOPRIM_dom"/>
</dbReference>
<dbReference type="InterPro" id="IPR034137">
    <property type="entry name" value="TOPRIM_RecR"/>
</dbReference>
<dbReference type="NCBIfam" id="TIGR00615">
    <property type="entry name" value="recR"/>
    <property type="match status" value="1"/>
</dbReference>
<dbReference type="PANTHER" id="PTHR30446">
    <property type="entry name" value="RECOMBINATION PROTEIN RECR"/>
    <property type="match status" value="1"/>
</dbReference>
<dbReference type="PANTHER" id="PTHR30446:SF0">
    <property type="entry name" value="RECOMBINATION PROTEIN RECR"/>
    <property type="match status" value="1"/>
</dbReference>
<dbReference type="Pfam" id="PF21175">
    <property type="entry name" value="RecR_C"/>
    <property type="match status" value="1"/>
</dbReference>
<dbReference type="Pfam" id="PF21176">
    <property type="entry name" value="RecR_HhH"/>
    <property type="match status" value="1"/>
</dbReference>
<dbReference type="Pfam" id="PF02132">
    <property type="entry name" value="RecR_ZnF"/>
    <property type="match status" value="1"/>
</dbReference>
<dbReference type="Pfam" id="PF13662">
    <property type="entry name" value="Toprim_4"/>
    <property type="match status" value="1"/>
</dbReference>
<dbReference type="SMART" id="SM00493">
    <property type="entry name" value="TOPRIM"/>
    <property type="match status" value="1"/>
</dbReference>
<dbReference type="SUPFAM" id="SSF111304">
    <property type="entry name" value="Recombination protein RecR"/>
    <property type="match status" value="1"/>
</dbReference>
<dbReference type="PROSITE" id="PS01300">
    <property type="entry name" value="RECR"/>
    <property type="match status" value="1"/>
</dbReference>
<dbReference type="PROSITE" id="PS50880">
    <property type="entry name" value="TOPRIM"/>
    <property type="match status" value="1"/>
</dbReference>
<comment type="function">
    <text evidence="1">May play a role in DNA repair. It seems to be involved in an RecBC-independent recombinational process of DNA repair. It may act with RecF and RecO.</text>
</comment>
<comment type="similarity">
    <text evidence="1">Belongs to the RecR family.</text>
</comment>
<feature type="chain" id="PRO_1000089705" description="Recombination protein RecR">
    <location>
        <begin position="1"/>
        <end position="200"/>
    </location>
</feature>
<feature type="domain" description="Toprim" evidence="1">
    <location>
        <begin position="82"/>
        <end position="177"/>
    </location>
</feature>
<feature type="zinc finger region" description="C4-type" evidence="1">
    <location>
        <begin position="59"/>
        <end position="74"/>
    </location>
</feature>
<sequence>MALAYDGAIQRLIDAFGRLPGIGPKGAQRIAFYMLSAPEDEARDLAEAIEEVKAKIRFCDICGNVCESSPCPVCADPRRDRSVICVVEEPKDVMSIERTREYHGLYHVLGGAINPMANVGPADLRIPGLLKRLEGDEVKEVIMALDPNIEGEATTSYLTQLLRPVGVKVTRLASGLPVGSDLEYADEITLGRALAGRREA</sequence>
<evidence type="ECO:0000255" key="1">
    <source>
        <dbReference type="HAMAP-Rule" id="MF_00017"/>
    </source>
</evidence>
<organism>
    <name type="scientific">Bifidobacterium longum (strain DJO10A)</name>
    <dbReference type="NCBI Taxonomy" id="205913"/>
    <lineage>
        <taxon>Bacteria</taxon>
        <taxon>Bacillati</taxon>
        <taxon>Actinomycetota</taxon>
        <taxon>Actinomycetes</taxon>
        <taxon>Bifidobacteriales</taxon>
        <taxon>Bifidobacteriaceae</taxon>
        <taxon>Bifidobacterium</taxon>
    </lineage>
</organism>
<reference key="1">
    <citation type="journal article" date="2008" name="BMC Genomics">
        <title>Comparative genomic analysis of the gut bacterium Bifidobacterium longum reveals loci susceptible to deletion during pure culture growth.</title>
        <authorList>
            <person name="Lee J.H."/>
            <person name="Karamychev V.N."/>
            <person name="Kozyavkin S.A."/>
            <person name="Mills D."/>
            <person name="Pavlov A.R."/>
            <person name="Pavlova N.V."/>
            <person name="Polouchine N.N."/>
            <person name="Richardson P.M."/>
            <person name="Shakhova V.V."/>
            <person name="Slesarev A.I."/>
            <person name="Weimer B."/>
            <person name="O'Sullivan D.J."/>
        </authorList>
    </citation>
    <scope>NUCLEOTIDE SEQUENCE [LARGE SCALE GENOMIC DNA]</scope>
    <source>
        <strain>DJO10A</strain>
    </source>
</reference>
<accession>B3DUB4</accession>